<organism>
    <name type="scientific">Klebsiella pneumoniae subsp. pneumoniae (strain ATCC 700721 / MGH 78578)</name>
    <dbReference type="NCBI Taxonomy" id="272620"/>
    <lineage>
        <taxon>Bacteria</taxon>
        <taxon>Pseudomonadati</taxon>
        <taxon>Pseudomonadota</taxon>
        <taxon>Gammaproteobacteria</taxon>
        <taxon>Enterobacterales</taxon>
        <taxon>Enterobacteriaceae</taxon>
        <taxon>Klebsiella/Raoultella group</taxon>
        <taxon>Klebsiella</taxon>
        <taxon>Klebsiella pneumoniae complex</taxon>
    </lineage>
</organism>
<sequence>MRTSQYLLSTLKETPADAEVISHQLMLRAGMIRKLASGLYTWLPTGVRVLKKVENIVREEMNNAGAIEVLMPVVQPSELWQESGRWEQYGPELLRIADRGDRPFVLGPTHEEVITDLIRNELNSYKQLPLNFYQIQTKFRDEVRPRFGVMRSREFLMKDAYSFHTSQESLQETYDAMYAAYSKIFSRMGLDFRAVQADTGSIGGSASHEFQVLAQSGEDDVIFSDSSDYAANIEFAEAVAPKEPRAAATQEMTLVDTPNAKTIAELVEQFNLPIEKTVKTLLVKAVEDSASPLVALLVRGDHELNEVKAEKLPQVASPLTFATEEEIRALVNAGPGSLGPVNMPVPVIIDRTVAVMSDFAAGANIDGKHYFGINWDRDVATPEVADIRNVVAGDPSPDGKGTLLIKRGIEVGHIFQLGTKYSEAMKAAVQGEDGRNQILTMGCYGIGVTRVVAAAIEQNFDDRGIVWPDAIAPFQVAILPMNMHKSYRVQELAEKLYAELSAQGIEVLMDDRKERPGVMFADMELIGIPHTIVLGDRNLDNDDIEYKYRRNGEKQLIKTGDIVEYLVKAIKG</sequence>
<name>SYP_KLEP7</name>
<reference key="1">
    <citation type="submission" date="2006-09" db="EMBL/GenBank/DDBJ databases">
        <authorList>
            <consortium name="The Klebsiella pneumonia Genome Sequencing Project"/>
            <person name="McClelland M."/>
            <person name="Sanderson E.K."/>
            <person name="Spieth J."/>
            <person name="Clifton W.S."/>
            <person name="Latreille P."/>
            <person name="Sabo A."/>
            <person name="Pepin K."/>
            <person name="Bhonagiri V."/>
            <person name="Porwollik S."/>
            <person name="Ali J."/>
            <person name="Wilson R.K."/>
        </authorList>
    </citation>
    <scope>NUCLEOTIDE SEQUENCE [LARGE SCALE GENOMIC DNA]</scope>
    <source>
        <strain>ATCC 700721 / MGH 78578</strain>
    </source>
</reference>
<comment type="function">
    <text evidence="1">Catalyzes the attachment of proline to tRNA(Pro) in a two-step reaction: proline is first activated by ATP to form Pro-AMP and then transferred to the acceptor end of tRNA(Pro). As ProRS can inadvertently accommodate and process non-cognate amino acids such as alanine and cysteine, to avoid such errors it has two additional distinct editing activities against alanine. One activity is designated as 'pretransfer' editing and involves the tRNA(Pro)-independent hydrolysis of activated Ala-AMP. The other activity is designated 'posttransfer' editing and involves deacylation of mischarged Ala-tRNA(Pro). The misacylated Cys-tRNA(Pro) is not edited by ProRS.</text>
</comment>
<comment type="catalytic activity">
    <reaction evidence="1">
        <text>tRNA(Pro) + L-proline + ATP = L-prolyl-tRNA(Pro) + AMP + diphosphate</text>
        <dbReference type="Rhea" id="RHEA:14305"/>
        <dbReference type="Rhea" id="RHEA-COMP:9700"/>
        <dbReference type="Rhea" id="RHEA-COMP:9702"/>
        <dbReference type="ChEBI" id="CHEBI:30616"/>
        <dbReference type="ChEBI" id="CHEBI:33019"/>
        <dbReference type="ChEBI" id="CHEBI:60039"/>
        <dbReference type="ChEBI" id="CHEBI:78442"/>
        <dbReference type="ChEBI" id="CHEBI:78532"/>
        <dbReference type="ChEBI" id="CHEBI:456215"/>
        <dbReference type="EC" id="6.1.1.15"/>
    </reaction>
</comment>
<comment type="subunit">
    <text evidence="1">Homodimer.</text>
</comment>
<comment type="subcellular location">
    <subcellularLocation>
        <location evidence="1">Cytoplasm</location>
    </subcellularLocation>
</comment>
<comment type="domain">
    <text evidence="1">Consists of three domains: the N-terminal catalytic domain, the editing domain and the C-terminal anticodon-binding domain.</text>
</comment>
<comment type="similarity">
    <text evidence="1">Belongs to the class-II aminoacyl-tRNA synthetase family. ProS type 1 subfamily.</text>
</comment>
<proteinExistence type="inferred from homology"/>
<gene>
    <name evidence="1" type="primary">proS</name>
    <name type="ordered locus">KPN78578_02070</name>
    <name type="ORF">KPN_00208</name>
</gene>
<dbReference type="EC" id="6.1.1.15" evidence="1"/>
<dbReference type="EMBL" id="CP000647">
    <property type="protein sequence ID" value="ABR75668.1"/>
    <property type="molecule type" value="Genomic_DNA"/>
</dbReference>
<dbReference type="RefSeq" id="WP_004151928.1">
    <property type="nucleotide sequence ID" value="NC_009648.1"/>
</dbReference>
<dbReference type="SMR" id="A6T4Z7"/>
<dbReference type="STRING" id="272620.KPN_00208"/>
<dbReference type="jPOST" id="A6T4Z7"/>
<dbReference type="PaxDb" id="272620-KPN_00208"/>
<dbReference type="EnsemblBacteria" id="ABR75668">
    <property type="protein sequence ID" value="ABR75668"/>
    <property type="gene ID" value="KPN_00208"/>
</dbReference>
<dbReference type="KEGG" id="kpn:KPN_00208"/>
<dbReference type="HOGENOM" id="CLU_016739_0_0_6"/>
<dbReference type="Proteomes" id="UP000000265">
    <property type="component" value="Chromosome"/>
</dbReference>
<dbReference type="GO" id="GO:0005829">
    <property type="term" value="C:cytosol"/>
    <property type="evidence" value="ECO:0007669"/>
    <property type="project" value="TreeGrafter"/>
</dbReference>
<dbReference type="GO" id="GO:0002161">
    <property type="term" value="F:aminoacyl-tRNA deacylase activity"/>
    <property type="evidence" value="ECO:0007669"/>
    <property type="project" value="InterPro"/>
</dbReference>
<dbReference type="GO" id="GO:0005524">
    <property type="term" value="F:ATP binding"/>
    <property type="evidence" value="ECO:0007669"/>
    <property type="project" value="UniProtKB-UniRule"/>
</dbReference>
<dbReference type="GO" id="GO:0004827">
    <property type="term" value="F:proline-tRNA ligase activity"/>
    <property type="evidence" value="ECO:0007669"/>
    <property type="project" value="UniProtKB-UniRule"/>
</dbReference>
<dbReference type="GO" id="GO:0006433">
    <property type="term" value="P:prolyl-tRNA aminoacylation"/>
    <property type="evidence" value="ECO:0007669"/>
    <property type="project" value="UniProtKB-UniRule"/>
</dbReference>
<dbReference type="CDD" id="cd04334">
    <property type="entry name" value="ProRS-INS"/>
    <property type="match status" value="1"/>
</dbReference>
<dbReference type="CDD" id="cd00861">
    <property type="entry name" value="ProRS_anticodon_short"/>
    <property type="match status" value="1"/>
</dbReference>
<dbReference type="CDD" id="cd00779">
    <property type="entry name" value="ProRS_core_prok"/>
    <property type="match status" value="1"/>
</dbReference>
<dbReference type="FunFam" id="3.30.930.10:FF:000043">
    <property type="entry name" value="Proline--tRNA ligase"/>
    <property type="match status" value="1"/>
</dbReference>
<dbReference type="FunFam" id="3.30.930.10:FF:000097">
    <property type="entry name" value="Proline--tRNA ligase"/>
    <property type="match status" value="1"/>
</dbReference>
<dbReference type="FunFam" id="3.40.50.800:FF:000006">
    <property type="entry name" value="Proline--tRNA ligase"/>
    <property type="match status" value="1"/>
</dbReference>
<dbReference type="FunFam" id="3.90.960.10:FF:000001">
    <property type="entry name" value="Proline--tRNA ligase"/>
    <property type="match status" value="1"/>
</dbReference>
<dbReference type="Gene3D" id="3.40.50.800">
    <property type="entry name" value="Anticodon-binding domain"/>
    <property type="match status" value="1"/>
</dbReference>
<dbReference type="Gene3D" id="3.30.930.10">
    <property type="entry name" value="Bira Bifunctional Protein, Domain 2"/>
    <property type="match status" value="2"/>
</dbReference>
<dbReference type="Gene3D" id="3.90.960.10">
    <property type="entry name" value="YbaK/aminoacyl-tRNA synthetase-associated domain"/>
    <property type="match status" value="1"/>
</dbReference>
<dbReference type="HAMAP" id="MF_01569">
    <property type="entry name" value="Pro_tRNA_synth_type1"/>
    <property type="match status" value="1"/>
</dbReference>
<dbReference type="InterPro" id="IPR002314">
    <property type="entry name" value="aa-tRNA-synt_IIb"/>
</dbReference>
<dbReference type="InterPro" id="IPR006195">
    <property type="entry name" value="aa-tRNA-synth_II"/>
</dbReference>
<dbReference type="InterPro" id="IPR045864">
    <property type="entry name" value="aa-tRNA-synth_II/BPL/LPL"/>
</dbReference>
<dbReference type="InterPro" id="IPR004154">
    <property type="entry name" value="Anticodon-bd"/>
</dbReference>
<dbReference type="InterPro" id="IPR036621">
    <property type="entry name" value="Anticodon-bd_dom_sf"/>
</dbReference>
<dbReference type="InterPro" id="IPR002316">
    <property type="entry name" value="Pro-tRNA-ligase_IIa"/>
</dbReference>
<dbReference type="InterPro" id="IPR004500">
    <property type="entry name" value="Pro-tRNA-synth_IIa_bac-type"/>
</dbReference>
<dbReference type="InterPro" id="IPR023717">
    <property type="entry name" value="Pro-tRNA-Synthase_IIa_type1"/>
</dbReference>
<dbReference type="InterPro" id="IPR050062">
    <property type="entry name" value="Pro-tRNA_synthetase"/>
</dbReference>
<dbReference type="InterPro" id="IPR044140">
    <property type="entry name" value="ProRS_anticodon_short"/>
</dbReference>
<dbReference type="InterPro" id="IPR033730">
    <property type="entry name" value="ProRS_core_prok"/>
</dbReference>
<dbReference type="InterPro" id="IPR036754">
    <property type="entry name" value="YbaK/aa-tRNA-synt-asso_dom_sf"/>
</dbReference>
<dbReference type="InterPro" id="IPR007214">
    <property type="entry name" value="YbaK/aa-tRNA-synth-assoc-dom"/>
</dbReference>
<dbReference type="NCBIfam" id="NF006625">
    <property type="entry name" value="PRK09194.1"/>
    <property type="match status" value="1"/>
</dbReference>
<dbReference type="NCBIfam" id="TIGR00409">
    <property type="entry name" value="proS_fam_II"/>
    <property type="match status" value="1"/>
</dbReference>
<dbReference type="PANTHER" id="PTHR42753">
    <property type="entry name" value="MITOCHONDRIAL RIBOSOME PROTEIN L39/PROLYL-TRNA LIGASE FAMILY MEMBER"/>
    <property type="match status" value="1"/>
</dbReference>
<dbReference type="PANTHER" id="PTHR42753:SF2">
    <property type="entry name" value="PROLINE--TRNA LIGASE"/>
    <property type="match status" value="1"/>
</dbReference>
<dbReference type="Pfam" id="PF03129">
    <property type="entry name" value="HGTP_anticodon"/>
    <property type="match status" value="1"/>
</dbReference>
<dbReference type="Pfam" id="PF00587">
    <property type="entry name" value="tRNA-synt_2b"/>
    <property type="match status" value="1"/>
</dbReference>
<dbReference type="Pfam" id="PF04073">
    <property type="entry name" value="tRNA_edit"/>
    <property type="match status" value="1"/>
</dbReference>
<dbReference type="PIRSF" id="PIRSF001535">
    <property type="entry name" value="ProRS_1"/>
    <property type="match status" value="1"/>
</dbReference>
<dbReference type="PRINTS" id="PR01046">
    <property type="entry name" value="TRNASYNTHPRO"/>
</dbReference>
<dbReference type="SUPFAM" id="SSF52954">
    <property type="entry name" value="Class II aaRS ABD-related"/>
    <property type="match status" value="1"/>
</dbReference>
<dbReference type="SUPFAM" id="SSF55681">
    <property type="entry name" value="Class II aaRS and biotin synthetases"/>
    <property type="match status" value="1"/>
</dbReference>
<dbReference type="SUPFAM" id="SSF55826">
    <property type="entry name" value="YbaK/ProRS associated domain"/>
    <property type="match status" value="1"/>
</dbReference>
<dbReference type="PROSITE" id="PS50862">
    <property type="entry name" value="AA_TRNA_LIGASE_II"/>
    <property type="match status" value="1"/>
</dbReference>
<protein>
    <recommendedName>
        <fullName evidence="1">Proline--tRNA ligase</fullName>
        <ecNumber evidence="1">6.1.1.15</ecNumber>
    </recommendedName>
    <alternativeName>
        <fullName evidence="1">Prolyl-tRNA synthetase</fullName>
        <shortName evidence="1">ProRS</shortName>
    </alternativeName>
</protein>
<evidence type="ECO:0000255" key="1">
    <source>
        <dbReference type="HAMAP-Rule" id="MF_01569"/>
    </source>
</evidence>
<accession>A6T4Z7</accession>
<feature type="chain" id="PRO_1000069147" description="Proline--tRNA ligase">
    <location>
        <begin position="1"/>
        <end position="572"/>
    </location>
</feature>
<keyword id="KW-0030">Aminoacyl-tRNA synthetase</keyword>
<keyword id="KW-0067">ATP-binding</keyword>
<keyword id="KW-0963">Cytoplasm</keyword>
<keyword id="KW-0436">Ligase</keyword>
<keyword id="KW-0547">Nucleotide-binding</keyword>
<keyword id="KW-0648">Protein biosynthesis</keyword>